<evidence type="ECO:0000255" key="1">
    <source>
        <dbReference type="HAMAP-Rule" id="MF_00692"/>
    </source>
</evidence>
<feature type="chain" id="PRO_1000132120" description="Protein nucleotidyltransferase YdiU">
    <location>
        <begin position="1"/>
        <end position="500"/>
    </location>
</feature>
<feature type="active site" description="Proton acceptor" evidence="1">
    <location>
        <position position="258"/>
    </location>
</feature>
<feature type="binding site" evidence="1">
    <location>
        <position position="96"/>
    </location>
    <ligand>
        <name>ATP</name>
        <dbReference type="ChEBI" id="CHEBI:30616"/>
    </ligand>
</feature>
<feature type="binding site" evidence="1">
    <location>
        <position position="98"/>
    </location>
    <ligand>
        <name>ATP</name>
        <dbReference type="ChEBI" id="CHEBI:30616"/>
    </ligand>
</feature>
<feature type="binding site" evidence="1">
    <location>
        <position position="99"/>
    </location>
    <ligand>
        <name>ATP</name>
        <dbReference type="ChEBI" id="CHEBI:30616"/>
    </ligand>
</feature>
<feature type="binding site" evidence="1">
    <location>
        <position position="119"/>
    </location>
    <ligand>
        <name>ATP</name>
        <dbReference type="ChEBI" id="CHEBI:30616"/>
    </ligand>
</feature>
<feature type="binding site" evidence="1">
    <location>
        <position position="131"/>
    </location>
    <ligand>
        <name>ATP</name>
        <dbReference type="ChEBI" id="CHEBI:30616"/>
    </ligand>
</feature>
<feature type="binding site" evidence="1">
    <location>
        <position position="132"/>
    </location>
    <ligand>
        <name>ATP</name>
        <dbReference type="ChEBI" id="CHEBI:30616"/>
    </ligand>
</feature>
<feature type="binding site" evidence="1">
    <location>
        <position position="182"/>
    </location>
    <ligand>
        <name>ATP</name>
        <dbReference type="ChEBI" id="CHEBI:30616"/>
    </ligand>
</feature>
<feature type="binding site" evidence="1">
    <location>
        <position position="189"/>
    </location>
    <ligand>
        <name>ATP</name>
        <dbReference type="ChEBI" id="CHEBI:30616"/>
    </ligand>
</feature>
<feature type="binding site" evidence="1">
    <location>
        <position position="259"/>
    </location>
    <ligand>
        <name>Mg(2+)</name>
        <dbReference type="ChEBI" id="CHEBI:18420"/>
    </ligand>
</feature>
<feature type="binding site" evidence="1">
    <location>
        <position position="268"/>
    </location>
    <ligand>
        <name>ATP</name>
        <dbReference type="ChEBI" id="CHEBI:30616"/>
    </ligand>
</feature>
<feature type="binding site" evidence="1">
    <location>
        <position position="268"/>
    </location>
    <ligand>
        <name>Mg(2+)</name>
        <dbReference type="ChEBI" id="CHEBI:18420"/>
    </ligand>
</feature>
<protein>
    <recommendedName>
        <fullName evidence="1">Protein nucleotidyltransferase YdiU</fullName>
        <ecNumber evidence="1">2.7.7.-</ecNumber>
    </recommendedName>
    <alternativeName>
        <fullName evidence="1">Protein adenylyltransferase YdiU</fullName>
        <ecNumber evidence="1">2.7.7.108</ecNumber>
    </alternativeName>
    <alternativeName>
        <fullName evidence="1">Protein uridylyltransferase YdiU</fullName>
        <ecNumber evidence="1">2.7.7.-</ecNumber>
    </alternativeName>
</protein>
<reference key="1">
    <citation type="journal article" date="2010" name="Stand. Genomic Sci.">
        <title>Complete genome sequence of Rhizobium leguminosarum bv trifolii strain WSM2304, an effective microsymbiont of the South American clover Trifolium polymorphum.</title>
        <authorList>
            <person name="Reeve W."/>
            <person name="O'Hara G."/>
            <person name="Chain P."/>
            <person name="Ardley J."/>
            <person name="Brau L."/>
            <person name="Nandesena K."/>
            <person name="Tiwari R."/>
            <person name="Malfatti S."/>
            <person name="Kiss H."/>
            <person name="Lapidus A."/>
            <person name="Copeland A."/>
            <person name="Nolan M."/>
            <person name="Land M."/>
            <person name="Ivanova N."/>
            <person name="Mavromatis K."/>
            <person name="Markowitz V."/>
            <person name="Kyrpides N."/>
            <person name="Melino V."/>
            <person name="Denton M."/>
            <person name="Yates R."/>
            <person name="Howieson J."/>
        </authorList>
    </citation>
    <scope>NUCLEOTIDE SEQUENCE [LARGE SCALE GENOMIC DNA]</scope>
    <source>
        <strain>WSM2304</strain>
    </source>
</reference>
<accession>B5ZUP2</accession>
<gene>
    <name evidence="1" type="primary">ydiU</name>
    <name evidence="1" type="synonym">selO</name>
    <name type="ordered locus">Rleg2_0857</name>
</gene>
<dbReference type="EC" id="2.7.7.-" evidence="1"/>
<dbReference type="EC" id="2.7.7.108" evidence="1"/>
<dbReference type="EMBL" id="CP001191">
    <property type="protein sequence ID" value="ACI54151.1"/>
    <property type="molecule type" value="Genomic_DNA"/>
</dbReference>
<dbReference type="RefSeq" id="WP_012557020.1">
    <property type="nucleotide sequence ID" value="NC_011369.1"/>
</dbReference>
<dbReference type="SMR" id="B5ZUP2"/>
<dbReference type="STRING" id="395492.Rleg2_0857"/>
<dbReference type="KEGG" id="rlt:Rleg2_0857"/>
<dbReference type="eggNOG" id="COG0397">
    <property type="taxonomic scope" value="Bacteria"/>
</dbReference>
<dbReference type="HOGENOM" id="CLU_010245_4_1_5"/>
<dbReference type="Proteomes" id="UP000008330">
    <property type="component" value="Chromosome"/>
</dbReference>
<dbReference type="GO" id="GO:0070733">
    <property type="term" value="F:AMPylase activity"/>
    <property type="evidence" value="ECO:0007669"/>
    <property type="project" value="RHEA"/>
</dbReference>
<dbReference type="GO" id="GO:0005524">
    <property type="term" value="F:ATP binding"/>
    <property type="evidence" value="ECO:0007669"/>
    <property type="project" value="UniProtKB-UniRule"/>
</dbReference>
<dbReference type="GO" id="GO:0000287">
    <property type="term" value="F:magnesium ion binding"/>
    <property type="evidence" value="ECO:0007669"/>
    <property type="project" value="UniProtKB-UniRule"/>
</dbReference>
<dbReference type="HAMAP" id="MF_00692">
    <property type="entry name" value="YdiU_SelO"/>
    <property type="match status" value="1"/>
</dbReference>
<dbReference type="InterPro" id="IPR003846">
    <property type="entry name" value="SelO"/>
</dbReference>
<dbReference type="NCBIfam" id="NF000658">
    <property type="entry name" value="PRK00029.1"/>
    <property type="match status" value="1"/>
</dbReference>
<dbReference type="PANTHER" id="PTHR32057">
    <property type="entry name" value="PROTEIN ADENYLYLTRANSFERASE SELO, MITOCHONDRIAL"/>
    <property type="match status" value="1"/>
</dbReference>
<dbReference type="PANTHER" id="PTHR32057:SF14">
    <property type="entry name" value="PROTEIN ADENYLYLTRANSFERASE SELO, MITOCHONDRIAL"/>
    <property type="match status" value="1"/>
</dbReference>
<dbReference type="Pfam" id="PF02696">
    <property type="entry name" value="SelO"/>
    <property type="match status" value="1"/>
</dbReference>
<name>SELO_RHILW</name>
<keyword id="KW-0067">ATP-binding</keyword>
<keyword id="KW-0460">Magnesium</keyword>
<keyword id="KW-0464">Manganese</keyword>
<keyword id="KW-0479">Metal-binding</keyword>
<keyword id="KW-0547">Nucleotide-binding</keyword>
<keyword id="KW-0548">Nucleotidyltransferase</keyword>
<keyword id="KW-1185">Reference proteome</keyword>
<keyword id="KW-0808">Transferase</keyword>
<organism>
    <name type="scientific">Rhizobium leguminosarum bv. trifolii (strain WSM2304)</name>
    <dbReference type="NCBI Taxonomy" id="395492"/>
    <lineage>
        <taxon>Bacteria</taxon>
        <taxon>Pseudomonadati</taxon>
        <taxon>Pseudomonadota</taxon>
        <taxon>Alphaproteobacteria</taxon>
        <taxon>Hyphomicrobiales</taxon>
        <taxon>Rhizobiaceae</taxon>
        <taxon>Rhizobium/Agrobacterium group</taxon>
        <taxon>Rhizobium</taxon>
    </lineage>
</organism>
<sequence>MTSTLQKNRAGAAFPFDNSYAGLPARFFAAQTPTAVAEPWLIKLNEPLAVELGLDVETLRRDGAAIFSGNLVPEGAEPLAMAYAGHQFGGFSPQLGDGRAILLGEVVDRSGRRYDIQLKGAGPTPFSRRGDGRAAIGPVLREYIISEAMFALGIPATRALAAVTTGEPVYREEVLPGAVFTRVAASHIRVGTFQFFAARGDTDGVRALADYVIDRHYPDLKDADNPYLSLYSAVSERQAALIARWLHVGFIHGVMNTDNMTVSGETIDFGPCAFMDNYDPATVFSSIDQHGRYAYANQPGIGQWNLARLGETLLPLIDEEPDGAVDKANAVIRAYGERFQAHWLAGMRGKIGLAGEEDGDLELVQALLSLMQAQGADFTLTFRRLSDLAGDAAAETAFAASFREPEACGPWLAQWRERLSRDPQTAAERATAMCRVNPAFIPRNHRVEQAIEAAVENGDFTLFEALLTVLAKPYEDQPGFAAYMEPPKPSERVLATFCGT</sequence>
<proteinExistence type="inferred from homology"/>
<comment type="function">
    <text evidence="1">Nucleotidyltransferase involved in the post-translational modification of proteins. It can catalyze the addition of adenosine monophosphate (AMP) or uridine monophosphate (UMP) to a protein, resulting in modifications known as AMPylation and UMPylation.</text>
</comment>
<comment type="catalytic activity">
    <reaction evidence="1">
        <text>L-seryl-[protein] + ATP = 3-O-(5'-adenylyl)-L-seryl-[protein] + diphosphate</text>
        <dbReference type="Rhea" id="RHEA:58120"/>
        <dbReference type="Rhea" id="RHEA-COMP:9863"/>
        <dbReference type="Rhea" id="RHEA-COMP:15073"/>
        <dbReference type="ChEBI" id="CHEBI:29999"/>
        <dbReference type="ChEBI" id="CHEBI:30616"/>
        <dbReference type="ChEBI" id="CHEBI:33019"/>
        <dbReference type="ChEBI" id="CHEBI:142516"/>
        <dbReference type="EC" id="2.7.7.108"/>
    </reaction>
</comment>
<comment type="catalytic activity">
    <reaction evidence="1">
        <text>L-threonyl-[protein] + ATP = 3-O-(5'-adenylyl)-L-threonyl-[protein] + diphosphate</text>
        <dbReference type="Rhea" id="RHEA:54292"/>
        <dbReference type="Rhea" id="RHEA-COMP:11060"/>
        <dbReference type="Rhea" id="RHEA-COMP:13847"/>
        <dbReference type="ChEBI" id="CHEBI:30013"/>
        <dbReference type="ChEBI" id="CHEBI:30616"/>
        <dbReference type="ChEBI" id="CHEBI:33019"/>
        <dbReference type="ChEBI" id="CHEBI:138113"/>
        <dbReference type="EC" id="2.7.7.108"/>
    </reaction>
</comment>
<comment type="catalytic activity">
    <reaction evidence="1">
        <text>L-tyrosyl-[protein] + ATP = O-(5'-adenylyl)-L-tyrosyl-[protein] + diphosphate</text>
        <dbReference type="Rhea" id="RHEA:54288"/>
        <dbReference type="Rhea" id="RHEA-COMP:10136"/>
        <dbReference type="Rhea" id="RHEA-COMP:13846"/>
        <dbReference type="ChEBI" id="CHEBI:30616"/>
        <dbReference type="ChEBI" id="CHEBI:33019"/>
        <dbReference type="ChEBI" id="CHEBI:46858"/>
        <dbReference type="ChEBI" id="CHEBI:83624"/>
        <dbReference type="EC" id="2.7.7.108"/>
    </reaction>
</comment>
<comment type="catalytic activity">
    <reaction evidence="1">
        <text>L-histidyl-[protein] + UTP = N(tele)-(5'-uridylyl)-L-histidyl-[protein] + diphosphate</text>
        <dbReference type="Rhea" id="RHEA:83891"/>
        <dbReference type="Rhea" id="RHEA-COMP:9745"/>
        <dbReference type="Rhea" id="RHEA-COMP:20239"/>
        <dbReference type="ChEBI" id="CHEBI:29979"/>
        <dbReference type="ChEBI" id="CHEBI:33019"/>
        <dbReference type="ChEBI" id="CHEBI:46398"/>
        <dbReference type="ChEBI" id="CHEBI:233474"/>
    </reaction>
</comment>
<comment type="catalytic activity">
    <reaction evidence="1">
        <text>L-seryl-[protein] + UTP = O-(5'-uridylyl)-L-seryl-[protein] + diphosphate</text>
        <dbReference type="Rhea" id="RHEA:64604"/>
        <dbReference type="Rhea" id="RHEA-COMP:9863"/>
        <dbReference type="Rhea" id="RHEA-COMP:16635"/>
        <dbReference type="ChEBI" id="CHEBI:29999"/>
        <dbReference type="ChEBI" id="CHEBI:33019"/>
        <dbReference type="ChEBI" id="CHEBI:46398"/>
        <dbReference type="ChEBI" id="CHEBI:156051"/>
    </reaction>
</comment>
<comment type="catalytic activity">
    <reaction evidence="1">
        <text>L-tyrosyl-[protein] + UTP = O-(5'-uridylyl)-L-tyrosyl-[protein] + diphosphate</text>
        <dbReference type="Rhea" id="RHEA:83887"/>
        <dbReference type="Rhea" id="RHEA-COMP:10136"/>
        <dbReference type="Rhea" id="RHEA-COMP:20238"/>
        <dbReference type="ChEBI" id="CHEBI:33019"/>
        <dbReference type="ChEBI" id="CHEBI:46398"/>
        <dbReference type="ChEBI" id="CHEBI:46858"/>
        <dbReference type="ChEBI" id="CHEBI:90602"/>
    </reaction>
</comment>
<comment type="cofactor">
    <cofactor evidence="1">
        <name>Mg(2+)</name>
        <dbReference type="ChEBI" id="CHEBI:18420"/>
    </cofactor>
    <cofactor evidence="1">
        <name>Mn(2+)</name>
        <dbReference type="ChEBI" id="CHEBI:29035"/>
    </cofactor>
</comment>
<comment type="similarity">
    <text evidence="1">Belongs to the SELO family.</text>
</comment>